<keyword id="KW-0004">4Fe-4S</keyword>
<keyword id="KW-0903">Direct protein sequencing</keyword>
<keyword id="KW-0249">Electron transport</keyword>
<keyword id="KW-0408">Iron</keyword>
<keyword id="KW-0411">Iron-sulfur</keyword>
<keyword id="KW-0472">Membrane</keyword>
<keyword id="KW-0479">Metal-binding</keyword>
<keyword id="KW-0560">Oxidoreductase</keyword>
<keyword id="KW-0602">Photosynthesis</keyword>
<keyword id="KW-0603">Photosystem I</keyword>
<keyword id="KW-0677">Repeat</keyword>
<keyword id="KW-0793">Thylakoid</keyword>
<keyword id="KW-0813">Transport</keyword>
<name>PSAC_SYNEL</name>
<accession>P0A416</accession>
<accession>P18083</accession>
<accession>P20451</accession>
<sequence length="81" mass="8800">MAHTVKIYDTCIGCTQCVRACPTDVLEMVPWDGCKAGQIASSPRTEDCVGCKRCETACPTDFLSIRVYLGAETTRSMGLAY</sequence>
<dbReference type="EC" id="1.97.1.12"/>
<dbReference type="EMBL" id="X63767">
    <property type="protein sequence ID" value="CAA45303.1"/>
    <property type="molecule type" value="Genomic_DNA"/>
</dbReference>
<dbReference type="PIR" id="S12734">
    <property type="entry name" value="JU0282"/>
</dbReference>
<dbReference type="SMR" id="P0A416"/>
<dbReference type="GO" id="GO:0009522">
    <property type="term" value="C:photosystem I"/>
    <property type="evidence" value="ECO:0007669"/>
    <property type="project" value="UniProtKB-KW"/>
</dbReference>
<dbReference type="GO" id="GO:0031676">
    <property type="term" value="C:plasma membrane-derived thylakoid membrane"/>
    <property type="evidence" value="ECO:0007669"/>
    <property type="project" value="UniProtKB-SubCell"/>
</dbReference>
<dbReference type="GO" id="GO:0051539">
    <property type="term" value="F:4 iron, 4 sulfur cluster binding"/>
    <property type="evidence" value="ECO:0007669"/>
    <property type="project" value="UniProtKB-KW"/>
</dbReference>
<dbReference type="GO" id="GO:0009055">
    <property type="term" value="F:electron transfer activity"/>
    <property type="evidence" value="ECO:0007669"/>
    <property type="project" value="UniProtKB-UniRule"/>
</dbReference>
<dbReference type="GO" id="GO:0046872">
    <property type="term" value="F:metal ion binding"/>
    <property type="evidence" value="ECO:0007669"/>
    <property type="project" value="UniProtKB-KW"/>
</dbReference>
<dbReference type="GO" id="GO:0016491">
    <property type="term" value="F:oxidoreductase activity"/>
    <property type="evidence" value="ECO:0007669"/>
    <property type="project" value="UniProtKB-KW"/>
</dbReference>
<dbReference type="GO" id="GO:0009773">
    <property type="term" value="P:photosynthetic electron transport in photosystem I"/>
    <property type="evidence" value="ECO:0007669"/>
    <property type="project" value="InterPro"/>
</dbReference>
<dbReference type="FunFam" id="3.30.70.20:FF:000001">
    <property type="entry name" value="Photosystem I iron-sulfur center"/>
    <property type="match status" value="1"/>
</dbReference>
<dbReference type="Gene3D" id="3.30.70.20">
    <property type="match status" value="1"/>
</dbReference>
<dbReference type="HAMAP" id="MF_01303">
    <property type="entry name" value="PSI_PsaC"/>
    <property type="match status" value="1"/>
</dbReference>
<dbReference type="InterPro" id="IPR017896">
    <property type="entry name" value="4Fe4S_Fe-S-bd"/>
</dbReference>
<dbReference type="InterPro" id="IPR017900">
    <property type="entry name" value="4Fe4S_Fe_S_CS"/>
</dbReference>
<dbReference type="InterPro" id="IPR050157">
    <property type="entry name" value="PSI_iron-sulfur_center"/>
</dbReference>
<dbReference type="InterPro" id="IPR017491">
    <property type="entry name" value="PSI_PsaC"/>
</dbReference>
<dbReference type="NCBIfam" id="TIGR03048">
    <property type="entry name" value="PS_I_psaC"/>
    <property type="match status" value="1"/>
</dbReference>
<dbReference type="PANTHER" id="PTHR24960:SF79">
    <property type="entry name" value="PHOTOSYSTEM I IRON-SULFUR CENTER"/>
    <property type="match status" value="1"/>
</dbReference>
<dbReference type="PANTHER" id="PTHR24960">
    <property type="entry name" value="PHOTOSYSTEM I IRON-SULFUR CENTER-RELATED"/>
    <property type="match status" value="1"/>
</dbReference>
<dbReference type="Pfam" id="PF12838">
    <property type="entry name" value="Fer4_7"/>
    <property type="match status" value="1"/>
</dbReference>
<dbReference type="SUPFAM" id="SSF54862">
    <property type="entry name" value="4Fe-4S ferredoxins"/>
    <property type="match status" value="1"/>
</dbReference>
<dbReference type="PROSITE" id="PS00198">
    <property type="entry name" value="4FE4S_FER_1"/>
    <property type="match status" value="2"/>
</dbReference>
<dbReference type="PROSITE" id="PS51379">
    <property type="entry name" value="4FE4S_FER_2"/>
    <property type="match status" value="2"/>
</dbReference>
<proteinExistence type="evidence at protein level"/>
<feature type="initiator methionine" description="Removed" evidence="2 3">
    <location>
        <position position="1"/>
    </location>
</feature>
<feature type="chain" id="PRO_0000062019" description="Photosystem I iron-sulfur center">
    <location>
        <begin position="2"/>
        <end position="81"/>
    </location>
</feature>
<feature type="domain" description="4Fe-4S ferredoxin-type 1">
    <location>
        <begin position="2"/>
        <end position="31"/>
    </location>
</feature>
<feature type="domain" description="4Fe-4S ferredoxin-type 2">
    <location>
        <begin position="37"/>
        <end position="68"/>
    </location>
</feature>
<feature type="binding site" evidence="1">
    <location>
        <position position="11"/>
    </location>
    <ligand>
        <name>[4Fe-4S] cluster</name>
        <dbReference type="ChEBI" id="CHEBI:49883"/>
        <label>1</label>
    </ligand>
</feature>
<feature type="binding site" evidence="1">
    <location>
        <position position="14"/>
    </location>
    <ligand>
        <name>[4Fe-4S] cluster</name>
        <dbReference type="ChEBI" id="CHEBI:49883"/>
        <label>1</label>
    </ligand>
</feature>
<feature type="binding site" evidence="1">
    <location>
        <position position="17"/>
    </location>
    <ligand>
        <name>[4Fe-4S] cluster</name>
        <dbReference type="ChEBI" id="CHEBI:49883"/>
        <label>1</label>
    </ligand>
</feature>
<feature type="binding site" evidence="1">
    <location>
        <position position="21"/>
    </location>
    <ligand>
        <name>[4Fe-4S] cluster</name>
        <dbReference type="ChEBI" id="CHEBI:49883"/>
        <label>2</label>
    </ligand>
</feature>
<feature type="binding site" evidence="1">
    <location>
        <position position="48"/>
    </location>
    <ligand>
        <name>[4Fe-4S] cluster</name>
        <dbReference type="ChEBI" id="CHEBI:49883"/>
        <label>2</label>
    </ligand>
</feature>
<feature type="binding site" evidence="1">
    <location>
        <position position="51"/>
    </location>
    <ligand>
        <name>[4Fe-4S] cluster</name>
        <dbReference type="ChEBI" id="CHEBI:49883"/>
        <label>2</label>
    </ligand>
</feature>
<feature type="binding site" evidence="1">
    <location>
        <position position="54"/>
    </location>
    <ligand>
        <name>[4Fe-4S] cluster</name>
        <dbReference type="ChEBI" id="CHEBI:49883"/>
        <label>2</label>
    </ligand>
</feature>
<feature type="binding site" evidence="1">
    <location>
        <position position="58"/>
    </location>
    <ligand>
        <name>[4Fe-4S] cluster</name>
        <dbReference type="ChEBI" id="CHEBI:49883"/>
        <label>1</label>
    </ligand>
</feature>
<protein>
    <recommendedName>
        <fullName>Photosystem I iron-sulfur center</fullName>
        <ecNumber>1.97.1.12</ecNumber>
    </recommendedName>
    <alternativeName>
        <fullName>9 kDa polypeptide</fullName>
    </alternativeName>
    <alternativeName>
        <fullName>PSI-C</fullName>
    </alternativeName>
    <alternativeName>
        <fullName>Photosystem I subunit VII</fullName>
    </alternativeName>
    <alternativeName>
        <fullName>PsaC</fullName>
    </alternativeName>
</protein>
<organism>
    <name type="scientific">Synechococcus elongatus</name>
    <dbReference type="NCBI Taxonomy" id="32046"/>
    <lineage>
        <taxon>Bacteria</taxon>
        <taxon>Bacillati</taxon>
        <taxon>Cyanobacteriota</taxon>
        <taxon>Cyanophyceae</taxon>
        <taxon>Synechococcales</taxon>
        <taxon>Synechococcaceae</taxon>
        <taxon>Synechococcus</taxon>
    </lineage>
</organism>
<reference key="1">
    <citation type="journal article" date="1993" name="Gene">
        <title>Genes encoding eleven subunits of photosystem I from the thermophilic cyanobacterium Synechococcus sp.</title>
        <authorList>
            <person name="Muehlenhoff U."/>
            <person name="Haehnel W."/>
            <person name="Witt H.T."/>
            <person name="Herrmann R.G."/>
        </authorList>
    </citation>
    <scope>NUCLEOTIDE SEQUENCE [GENOMIC DNA]</scope>
</reference>
<reference key="2">
    <citation type="journal article" date="1991" name="Protein Seq. Data Anal.">
        <title>Amino acid sequence of 10-kDa protein in photosystem I reaction-center complex from a thermophilic cyanobacterium, Synechococcus elongatus naegeli.</title>
        <authorList>
            <person name="Kotani N."/>
            <person name="Tsugita A."/>
            <person name="Aso K."/>
            <person name="Enami I."/>
        </authorList>
    </citation>
    <scope>PROTEIN SEQUENCE OF 2-81</scope>
</reference>
<reference key="3">
    <citation type="journal article" date="1990" name="Protein Seq. Data Anal.">
        <title>N-terminal amino acid sequence analysis of small subunits of photosystem I reaction center complex from a thermophilic cyanobacterium, Synechococcus elongatus nageli.</title>
        <authorList>
            <person name="Enami I."/>
            <person name="Kaiho H."/>
            <person name="Izumi H."/>
            <person name="Katoh S."/>
            <person name="Kotani N."/>
            <person name="Jone C.S."/>
            <person name="Kamo M."/>
            <person name="Tsugita A."/>
        </authorList>
    </citation>
    <scope>PROTEIN SEQUENCE OF 2-32</scope>
</reference>
<reference key="4">
    <citation type="journal article" date="2001" name="Biochim. Biophys. Acta">
        <title>Structure of photosystem I.</title>
        <authorList>
            <person name="Fromme P."/>
            <person name="Jordan P."/>
            <person name="Krauss N."/>
        </authorList>
    </citation>
    <scope>REVIEW</scope>
</reference>
<comment type="function">
    <text>Apoprotein for the two 4Fe-4S centers FA and FB of photosystem I (PSI); essential for photochemical activity. FB is the terminal electron acceptor of PSI, donating electrons to ferredoxin. The C-terminus interacts with PsaA/B/D and helps assemble the protein into the PSI complex. Required for binding of PsaD and PsaE to PSI. PSI is a plastocyanin/cytochrome c6-ferredoxin oxidoreductase, converting photonic excitation into a charge separation, which transfers an electron from the donor P700 chlorophyll pair to the spectroscopically characterized acceptors A0, A1, FX, FA and FB in turn.</text>
</comment>
<comment type="catalytic activity">
    <reaction>
        <text>reduced [plastocyanin] + hnu + oxidized [2Fe-2S]-[ferredoxin] = oxidized [plastocyanin] + reduced [2Fe-2S]-[ferredoxin]</text>
        <dbReference type="Rhea" id="RHEA:30407"/>
        <dbReference type="Rhea" id="RHEA-COMP:10000"/>
        <dbReference type="Rhea" id="RHEA-COMP:10001"/>
        <dbReference type="Rhea" id="RHEA-COMP:10039"/>
        <dbReference type="Rhea" id="RHEA-COMP:10040"/>
        <dbReference type="ChEBI" id="CHEBI:29036"/>
        <dbReference type="ChEBI" id="CHEBI:30212"/>
        <dbReference type="ChEBI" id="CHEBI:33737"/>
        <dbReference type="ChEBI" id="CHEBI:33738"/>
        <dbReference type="ChEBI" id="CHEBI:49552"/>
        <dbReference type="EC" id="1.97.1.12"/>
    </reaction>
</comment>
<comment type="cofactor">
    <cofactor>
        <name>[4Fe-4S] cluster</name>
        <dbReference type="ChEBI" id="CHEBI:49883"/>
    </cofactor>
    <text>Binds 2 [4Fe-4S] clusters. Cluster 2 is most probably the spectroscopically characterized electron acceptor FA and cluster 1 is most probably FB.</text>
</comment>
<comment type="subunit">
    <text>The cyanobacterial PSI reaction center is composed of one copy each of PsaA,B,C,D,E,F,I,J,K,L,M and X, and forms trimeric complexes.</text>
</comment>
<comment type="subcellular location">
    <subcellularLocation>
        <location>Cellular thylakoid membrane</location>
        <topology>Peripheral membrane protein</topology>
        <orientation>Cytoplasmic side</orientation>
    </subcellularLocation>
</comment>
<gene>
    <name type="primary">psaC</name>
</gene>
<evidence type="ECO:0000250" key="1"/>
<evidence type="ECO:0000269" key="2">
    <source>
    </source>
</evidence>
<evidence type="ECO:0000269" key="3">
    <source>
    </source>
</evidence>